<name>HYDA_PSEAE</name>
<feature type="chain" id="PRO_0000287767" description="D-hydantoinase/dihydropyrimidinase">
    <location>
        <begin position="1"/>
        <end position="479"/>
    </location>
</feature>
<feature type="binding site" evidence="3">
    <location>
        <position position="59"/>
    </location>
    <ligand>
        <name>Zn(2+)</name>
        <dbReference type="ChEBI" id="CHEBI:29105"/>
        <label>1</label>
    </ligand>
</feature>
<feature type="binding site" evidence="3">
    <location>
        <position position="61"/>
    </location>
    <ligand>
        <name>Zn(2+)</name>
        <dbReference type="ChEBI" id="CHEBI:29105"/>
        <label>1</label>
    </ligand>
</feature>
<feature type="binding site" description="via carbamate group" evidence="3">
    <location>
        <position position="150"/>
    </location>
    <ligand>
        <name>Zn(2+)</name>
        <dbReference type="ChEBI" id="CHEBI:29105"/>
        <label>1</label>
    </ligand>
</feature>
<feature type="binding site" description="via carbamate group" evidence="3">
    <location>
        <position position="150"/>
    </location>
    <ligand>
        <name>Zn(2+)</name>
        <dbReference type="ChEBI" id="CHEBI:29105"/>
        <label>2</label>
    </ligand>
</feature>
<feature type="binding site" evidence="3">
    <location>
        <position position="155"/>
    </location>
    <ligand>
        <name>substrate</name>
    </ligand>
</feature>
<feature type="binding site" evidence="3">
    <location>
        <position position="183"/>
    </location>
    <ligand>
        <name>Zn(2+)</name>
        <dbReference type="ChEBI" id="CHEBI:29105"/>
        <label>2</label>
    </ligand>
</feature>
<feature type="binding site" evidence="3">
    <location>
        <position position="239"/>
    </location>
    <ligand>
        <name>Zn(2+)</name>
        <dbReference type="ChEBI" id="CHEBI:29105"/>
        <label>2</label>
    </ligand>
</feature>
<feature type="binding site" evidence="3">
    <location>
        <position position="289"/>
    </location>
    <ligand>
        <name>substrate</name>
    </ligand>
</feature>
<feature type="binding site" evidence="3">
    <location>
        <position position="316"/>
    </location>
    <ligand>
        <name>Zn(2+)</name>
        <dbReference type="ChEBI" id="CHEBI:29105"/>
        <label>1</label>
    </ligand>
</feature>
<feature type="binding site" evidence="3">
    <location>
        <position position="337"/>
    </location>
    <ligand>
        <name>substrate</name>
    </ligand>
</feature>
<feature type="modified residue" description="N6-carboxylysine" evidence="3">
    <location>
        <position position="150"/>
    </location>
</feature>
<feature type="strand" evidence="5">
    <location>
        <begin position="3"/>
        <end position="7"/>
    </location>
</feature>
<feature type="strand" evidence="5">
    <location>
        <begin position="9"/>
        <end position="11"/>
    </location>
</feature>
<feature type="strand" evidence="5">
    <location>
        <begin position="16"/>
        <end position="18"/>
    </location>
</feature>
<feature type="strand" evidence="5">
    <location>
        <begin position="20"/>
        <end position="24"/>
    </location>
</feature>
<feature type="strand" evidence="5">
    <location>
        <begin position="27"/>
        <end position="32"/>
    </location>
</feature>
<feature type="strand" evidence="5">
    <location>
        <begin position="42"/>
        <end position="45"/>
    </location>
</feature>
<feature type="strand" evidence="5">
    <location>
        <begin position="49"/>
        <end position="53"/>
    </location>
</feature>
<feature type="strand" evidence="5">
    <location>
        <begin position="55"/>
        <end position="57"/>
    </location>
</feature>
<feature type="helix" evidence="5">
    <location>
        <begin position="75"/>
        <end position="84"/>
    </location>
</feature>
<feature type="strand" evidence="5">
    <location>
        <begin position="87"/>
        <end position="94"/>
    </location>
</feature>
<feature type="helix" evidence="5">
    <location>
        <begin position="102"/>
        <end position="113"/>
    </location>
</feature>
<feature type="strand" evidence="5">
    <location>
        <begin position="117"/>
        <end position="125"/>
    </location>
</feature>
<feature type="helix" evidence="5">
    <location>
        <begin position="131"/>
        <end position="143"/>
    </location>
</feature>
<feature type="strand" evidence="5">
    <location>
        <begin position="148"/>
        <end position="153"/>
    </location>
</feature>
<feature type="turn" evidence="5">
    <location>
        <begin position="156"/>
        <end position="159"/>
    </location>
</feature>
<feature type="helix" evidence="5">
    <location>
        <begin position="163"/>
        <end position="176"/>
    </location>
</feature>
<feature type="strand" evidence="5">
    <location>
        <begin position="179"/>
        <end position="183"/>
    </location>
</feature>
<feature type="helix" evidence="5">
    <location>
        <begin position="187"/>
        <end position="199"/>
    </location>
</feature>
<feature type="helix" evidence="5">
    <location>
        <begin position="207"/>
        <end position="210"/>
    </location>
</feature>
<feature type="helix" evidence="5">
    <location>
        <begin position="214"/>
        <end position="231"/>
    </location>
</feature>
<feature type="strand" evidence="5">
    <location>
        <begin position="235"/>
        <end position="237"/>
    </location>
</feature>
<feature type="helix" evidence="5">
    <location>
        <begin position="243"/>
        <end position="253"/>
    </location>
</feature>
<feature type="turn" evidence="5">
    <location>
        <begin position="254"/>
        <end position="256"/>
    </location>
</feature>
<feature type="strand" evidence="5">
    <location>
        <begin position="259"/>
        <end position="264"/>
    </location>
</feature>
<feature type="helix" evidence="5">
    <location>
        <begin position="265"/>
        <end position="269"/>
    </location>
</feature>
<feature type="helix" evidence="5">
    <location>
        <begin position="272"/>
        <end position="276"/>
    </location>
</feature>
<feature type="helix" evidence="5">
    <location>
        <begin position="280"/>
        <end position="285"/>
    </location>
</feature>
<feature type="helix" evidence="5">
    <location>
        <begin position="295"/>
        <end position="306"/>
    </location>
</feature>
<feature type="strand" evidence="5">
    <location>
        <begin position="312"/>
        <end position="314"/>
    </location>
</feature>
<feature type="helix" evidence="5">
    <location>
        <begin position="322"/>
        <end position="325"/>
    </location>
</feature>
<feature type="helix" evidence="5">
    <location>
        <begin position="326"/>
        <end position="328"/>
    </location>
</feature>
<feature type="helix" evidence="5">
    <location>
        <begin position="332"/>
        <end position="334"/>
    </location>
</feature>
<feature type="turn" evidence="5">
    <location>
        <begin position="342"/>
        <end position="344"/>
    </location>
</feature>
<feature type="helix" evidence="5">
    <location>
        <begin position="345"/>
        <end position="353"/>
    </location>
</feature>
<feature type="turn" evidence="5">
    <location>
        <begin position="354"/>
        <end position="357"/>
    </location>
</feature>
<feature type="helix" evidence="5">
    <location>
        <begin position="361"/>
        <end position="368"/>
    </location>
</feature>
<feature type="helix" evidence="5">
    <location>
        <begin position="370"/>
        <end position="375"/>
    </location>
</feature>
<feature type="turn" evidence="5">
    <location>
        <begin position="379"/>
        <end position="381"/>
    </location>
</feature>
<feature type="strand" evidence="5">
    <location>
        <begin position="393"/>
        <end position="403"/>
    </location>
</feature>
<feature type="turn" evidence="5">
    <location>
        <begin position="406"/>
        <end position="408"/>
    </location>
</feature>
<feature type="strand" evidence="5">
    <location>
        <begin position="410"/>
        <end position="414"/>
    </location>
</feature>
<feature type="turn" evidence="5">
    <location>
        <begin position="417"/>
        <end position="420"/>
    </location>
</feature>
<feature type="strand" evidence="5">
    <location>
        <begin position="422"/>
        <end position="432"/>
    </location>
</feature>
<feature type="strand" evidence="5">
    <location>
        <begin position="435"/>
        <end position="439"/>
    </location>
</feature>
<feature type="helix" evidence="5">
    <location>
        <begin position="461"/>
        <end position="471"/>
    </location>
</feature>
<proteinExistence type="evidence at protein level"/>
<dbReference type="EC" id="3.5.2.2" evidence="2"/>
<dbReference type="EMBL" id="AE004091">
    <property type="protein sequence ID" value="AAG03830.1"/>
    <property type="molecule type" value="Genomic_DNA"/>
</dbReference>
<dbReference type="PIR" id="H83590">
    <property type="entry name" value="H83590"/>
</dbReference>
<dbReference type="RefSeq" id="NP_249132.1">
    <property type="nucleotide sequence ID" value="NC_002516.2"/>
</dbReference>
<dbReference type="PDB" id="5E5C">
    <property type="method" value="X-ray"/>
    <property type="resolution" value="2.10 A"/>
    <property type="chains" value="A/C=1-479"/>
</dbReference>
<dbReference type="PDB" id="5YKD">
    <property type="method" value="X-ray"/>
    <property type="resolution" value="2.17 A"/>
    <property type="chains" value="A/B/C/D=1-479"/>
</dbReference>
<dbReference type="PDB" id="6AJD">
    <property type="method" value="X-ray"/>
    <property type="resolution" value="2.22 A"/>
    <property type="chains" value="A/B=1-479"/>
</dbReference>
<dbReference type="PDB" id="6KLK">
    <property type="method" value="X-ray"/>
    <property type="resolution" value="1.76 A"/>
    <property type="chains" value="A/B=1-479"/>
</dbReference>
<dbReference type="PDB" id="7E3U">
    <property type="method" value="X-ray"/>
    <property type="resolution" value="2.16 A"/>
    <property type="chains" value="A/B=1-479"/>
</dbReference>
<dbReference type="PDB" id="8WQ9">
    <property type="method" value="X-ray"/>
    <property type="resolution" value="1.97 A"/>
    <property type="chains" value="A/B=1-479"/>
</dbReference>
<dbReference type="PDBsum" id="5E5C"/>
<dbReference type="PDBsum" id="5YKD"/>
<dbReference type="PDBsum" id="6AJD"/>
<dbReference type="PDBsum" id="6KLK"/>
<dbReference type="PDBsum" id="7E3U"/>
<dbReference type="PDBsum" id="8WQ9"/>
<dbReference type="SMR" id="Q9I676"/>
<dbReference type="FunCoup" id="Q9I676">
    <property type="interactions" value="463"/>
</dbReference>
<dbReference type="STRING" id="208964.PA0441"/>
<dbReference type="MEROPS" id="M38.973"/>
<dbReference type="PaxDb" id="208964-PA0441"/>
<dbReference type="GeneID" id="882285"/>
<dbReference type="KEGG" id="pae:PA0441"/>
<dbReference type="PATRIC" id="fig|208964.12.peg.464"/>
<dbReference type="PseudoCAP" id="PA0441"/>
<dbReference type="HOGENOM" id="CLU_015572_2_2_6"/>
<dbReference type="InParanoid" id="Q9I676"/>
<dbReference type="OrthoDB" id="5687299at2"/>
<dbReference type="PhylomeDB" id="Q9I676"/>
<dbReference type="BioCyc" id="PAER208964:G1FZ6-445-MONOMER"/>
<dbReference type="BRENDA" id="3.5.2.2">
    <property type="organism ID" value="5087"/>
</dbReference>
<dbReference type="SABIO-RK" id="Q9I676"/>
<dbReference type="Proteomes" id="UP000002438">
    <property type="component" value="Chromosome"/>
</dbReference>
<dbReference type="GO" id="GO:0005829">
    <property type="term" value="C:cytosol"/>
    <property type="evidence" value="ECO:0000318"/>
    <property type="project" value="GO_Central"/>
</dbReference>
<dbReference type="GO" id="GO:0004157">
    <property type="term" value="F:dihydropyrimidinase activity"/>
    <property type="evidence" value="ECO:0007669"/>
    <property type="project" value="UniProtKB-EC"/>
</dbReference>
<dbReference type="GO" id="GO:0016812">
    <property type="term" value="F:hydrolase activity, acting on carbon-nitrogen (but not peptide) bonds, in cyclic amides"/>
    <property type="evidence" value="ECO:0000318"/>
    <property type="project" value="GO_Central"/>
</dbReference>
<dbReference type="GO" id="GO:0046872">
    <property type="term" value="F:metal ion binding"/>
    <property type="evidence" value="ECO:0007669"/>
    <property type="project" value="UniProtKB-KW"/>
</dbReference>
<dbReference type="CDD" id="cd01314">
    <property type="entry name" value="D-HYD"/>
    <property type="match status" value="1"/>
</dbReference>
<dbReference type="FunFam" id="3.20.20.140:FF:000001">
    <property type="entry name" value="Dihydropyrimidinase like 3"/>
    <property type="match status" value="1"/>
</dbReference>
<dbReference type="Gene3D" id="3.20.20.140">
    <property type="entry name" value="Metal-dependent hydrolases"/>
    <property type="match status" value="1"/>
</dbReference>
<dbReference type="Gene3D" id="2.30.40.10">
    <property type="entry name" value="Urease, subunit C, domain 1"/>
    <property type="match status" value="1"/>
</dbReference>
<dbReference type="InterPro" id="IPR006680">
    <property type="entry name" value="Amidohydro-rel"/>
</dbReference>
<dbReference type="InterPro" id="IPR011778">
    <property type="entry name" value="Hydantoinase/dihydroPyrase"/>
</dbReference>
<dbReference type="InterPro" id="IPR011059">
    <property type="entry name" value="Metal-dep_hydrolase_composite"/>
</dbReference>
<dbReference type="InterPro" id="IPR032466">
    <property type="entry name" value="Metal_Hydrolase"/>
</dbReference>
<dbReference type="InterPro" id="IPR050378">
    <property type="entry name" value="Metallo-dep_Hydrolases_sf"/>
</dbReference>
<dbReference type="NCBIfam" id="TIGR02033">
    <property type="entry name" value="D-hydantoinase"/>
    <property type="match status" value="1"/>
</dbReference>
<dbReference type="PANTHER" id="PTHR11647:SF1">
    <property type="entry name" value="COLLAPSIN RESPONSE MEDIATOR PROTEIN"/>
    <property type="match status" value="1"/>
</dbReference>
<dbReference type="PANTHER" id="PTHR11647">
    <property type="entry name" value="HYDRANTOINASE/DIHYDROPYRIMIDINASE FAMILY MEMBER"/>
    <property type="match status" value="1"/>
</dbReference>
<dbReference type="Pfam" id="PF01979">
    <property type="entry name" value="Amidohydro_1"/>
    <property type="match status" value="1"/>
</dbReference>
<dbReference type="SUPFAM" id="SSF51338">
    <property type="entry name" value="Composite domain of metallo-dependent hydrolases"/>
    <property type="match status" value="1"/>
</dbReference>
<dbReference type="SUPFAM" id="SSF51556">
    <property type="entry name" value="Metallo-dependent hydrolases"/>
    <property type="match status" value="1"/>
</dbReference>
<keyword id="KW-0002">3D-structure</keyword>
<keyword id="KW-0378">Hydrolase</keyword>
<keyword id="KW-0479">Metal-binding</keyword>
<keyword id="KW-1185">Reference proteome</keyword>
<keyword id="KW-0862">Zinc</keyword>
<sequence length="479" mass="52212">MSLLIRGATVVTHEESYRADVLCANGLIQAIGENLETPSGCDVLDGGGQYLMPGGIDPHTHMQLPFMGTVASEDFFSGTAAGLAGGTTSIIDFVIPNPRQSLLEAFHTWRGWAQKSAADYGFHVAITWWSDEVAREMGELVAQHGVNSFKHFMAYKNAIMAADDTLVASFERCLELGAVPTVHAENGELVFHLQQKLLAQGLTGPEAHPLSRPPQVEGEAASRAIRIAETLGTPLYLVHISSREALDEIAYARAKGQPVYGEVLAGHLLLDDSVYRHPDWATAAGYVMSPPFRPVEHQEALWRGLQSGNLHTTATDHCCFCAEQKAMGRDDFSKIPNGTAGIEDRMALLWDAGVNSGRLSMHEFVALTSTNTAKIFNLFPRKGAIRVGADADLVLWDPQGSRTLSAATHHQRVDFNIFEGRTVRGIPSHTISQGKLLWAAGDLRAEPGAGRYVERPAYPSVYEVLGRRAERQRPVAVER</sequence>
<accession>Q9I676</accession>
<comment type="function">
    <text evidence="1">Catalyzes the hydrolysis of dihydropyrimidines and of the structurally related DL-5-mono-substituted hydantoins, to produce N-carbamoyl-D-amino acids.</text>
</comment>
<comment type="catalytic activity">
    <reaction evidence="2">
        <text>5,6-dihydrouracil + H2O = 3-(carbamoylamino)propanoate + H(+)</text>
        <dbReference type="Rhea" id="RHEA:16121"/>
        <dbReference type="ChEBI" id="CHEBI:11892"/>
        <dbReference type="ChEBI" id="CHEBI:15377"/>
        <dbReference type="ChEBI" id="CHEBI:15378"/>
        <dbReference type="ChEBI" id="CHEBI:15901"/>
        <dbReference type="EC" id="3.5.2.2"/>
    </reaction>
</comment>
<comment type="cofactor">
    <cofactor evidence="2">
        <name>Zn(2+)</name>
        <dbReference type="ChEBI" id="CHEBI:29105"/>
    </cofactor>
    <text evidence="2">Binds 2 Zn(2+) ions per subunit.</text>
</comment>
<comment type="subunit">
    <text evidence="2">Homotetramer.</text>
</comment>
<comment type="PTM">
    <text evidence="1">Carboxylation allows a single lysine to coordinate two zinc ions.</text>
</comment>
<comment type="similarity">
    <text evidence="4">Belongs to the metallo-dependent hydrolases superfamily. Hydantoinase/dihydropyrimidinase family.</text>
</comment>
<gene>
    <name type="primary">dht</name>
    <name type="ordered locus">PA0441</name>
</gene>
<organism>
    <name type="scientific">Pseudomonas aeruginosa (strain ATCC 15692 / DSM 22644 / CIP 104116 / JCM 14847 / LMG 12228 / 1C / PRS 101 / PAO1)</name>
    <dbReference type="NCBI Taxonomy" id="208964"/>
    <lineage>
        <taxon>Bacteria</taxon>
        <taxon>Pseudomonadati</taxon>
        <taxon>Pseudomonadota</taxon>
        <taxon>Gammaproteobacteria</taxon>
        <taxon>Pseudomonadales</taxon>
        <taxon>Pseudomonadaceae</taxon>
        <taxon>Pseudomonas</taxon>
    </lineage>
</organism>
<evidence type="ECO:0000250" key="1"/>
<evidence type="ECO:0000250" key="2">
    <source>
        <dbReference type="UniProtKB" id="Q55DL0"/>
    </source>
</evidence>
<evidence type="ECO:0000250" key="3">
    <source>
        <dbReference type="UniProtKB" id="Q9P903"/>
    </source>
</evidence>
<evidence type="ECO:0000305" key="4"/>
<evidence type="ECO:0007829" key="5">
    <source>
        <dbReference type="PDB" id="6KLK"/>
    </source>
</evidence>
<reference key="1">
    <citation type="journal article" date="2000" name="Nature">
        <title>Complete genome sequence of Pseudomonas aeruginosa PAO1, an opportunistic pathogen.</title>
        <authorList>
            <person name="Stover C.K."/>
            <person name="Pham X.-Q.T."/>
            <person name="Erwin A.L."/>
            <person name="Mizoguchi S.D."/>
            <person name="Warrener P."/>
            <person name="Hickey M.J."/>
            <person name="Brinkman F.S.L."/>
            <person name="Hufnagle W.O."/>
            <person name="Kowalik D.J."/>
            <person name="Lagrou M."/>
            <person name="Garber R.L."/>
            <person name="Goltry L."/>
            <person name="Tolentino E."/>
            <person name="Westbrock-Wadman S."/>
            <person name="Yuan Y."/>
            <person name="Brody L.L."/>
            <person name="Coulter S.N."/>
            <person name="Folger K.R."/>
            <person name="Kas A."/>
            <person name="Larbig K."/>
            <person name="Lim R.M."/>
            <person name="Smith K.A."/>
            <person name="Spencer D.H."/>
            <person name="Wong G.K.-S."/>
            <person name="Wu Z."/>
            <person name="Paulsen I.T."/>
            <person name="Reizer J."/>
            <person name="Saier M.H. Jr."/>
            <person name="Hancock R.E.W."/>
            <person name="Lory S."/>
            <person name="Olson M.V."/>
        </authorList>
    </citation>
    <scope>NUCLEOTIDE SEQUENCE [LARGE SCALE GENOMIC DNA]</scope>
    <source>
        <strain>ATCC 15692 / DSM 22644 / CIP 104116 / JCM 14847 / LMG 12228 / 1C / PRS 101 / PAO1</strain>
    </source>
</reference>
<protein>
    <recommendedName>
        <fullName>D-hydantoinase/dihydropyrimidinase</fullName>
        <shortName>DHPase</shortName>
        <ecNumber evidence="2">3.5.2.2</ecNumber>
    </recommendedName>
</protein>